<reference key="1">
    <citation type="journal article" date="2008" name="PLoS ONE">
        <title>Survival in nuclear waste, extreme resistance, and potential applications gleaned from the genome sequence of Kineococcus radiotolerans SRS30216.</title>
        <authorList>
            <person name="Bagwell C.E."/>
            <person name="Bhat S."/>
            <person name="Hawkins G.M."/>
            <person name="Smith B.W."/>
            <person name="Biswas T."/>
            <person name="Hoover T.R."/>
            <person name="Saunders E."/>
            <person name="Han C.S."/>
            <person name="Tsodikov O.V."/>
            <person name="Shimkets L.J."/>
        </authorList>
    </citation>
    <scope>NUCLEOTIDE SEQUENCE [LARGE SCALE GENOMIC DNA]</scope>
    <source>
        <strain>ATCC BAA-149 / DSM 14245 / SRS30216</strain>
    </source>
</reference>
<keyword id="KW-0963">Cytoplasm</keyword>
<keyword id="KW-0489">Methyltransferase</keyword>
<keyword id="KW-1185">Reference proteome</keyword>
<keyword id="KW-0694">RNA-binding</keyword>
<keyword id="KW-0698">rRNA processing</keyword>
<keyword id="KW-0949">S-adenosyl-L-methionine</keyword>
<keyword id="KW-0808">Transferase</keyword>
<proteinExistence type="inferred from homology"/>
<dbReference type="EC" id="2.1.1.182" evidence="1"/>
<dbReference type="EMBL" id="CP000750">
    <property type="protein sequence ID" value="ABS02533.1"/>
    <property type="molecule type" value="Genomic_DNA"/>
</dbReference>
<dbReference type="RefSeq" id="WP_012084615.1">
    <property type="nucleotide sequence ID" value="NC_009664.2"/>
</dbReference>
<dbReference type="SMR" id="A6W6U4"/>
<dbReference type="STRING" id="266940.Krad_1045"/>
<dbReference type="KEGG" id="kra:Krad_1045"/>
<dbReference type="eggNOG" id="COG0030">
    <property type="taxonomic scope" value="Bacteria"/>
</dbReference>
<dbReference type="HOGENOM" id="CLU_041220_1_1_11"/>
<dbReference type="OrthoDB" id="9814755at2"/>
<dbReference type="Proteomes" id="UP000001116">
    <property type="component" value="Chromosome"/>
</dbReference>
<dbReference type="GO" id="GO:0005829">
    <property type="term" value="C:cytosol"/>
    <property type="evidence" value="ECO:0007669"/>
    <property type="project" value="TreeGrafter"/>
</dbReference>
<dbReference type="GO" id="GO:0052908">
    <property type="term" value="F:16S rRNA (adenine(1518)-N(6)/adenine(1519)-N(6))-dimethyltransferase activity"/>
    <property type="evidence" value="ECO:0007669"/>
    <property type="project" value="UniProtKB-EC"/>
</dbReference>
<dbReference type="GO" id="GO:0003723">
    <property type="term" value="F:RNA binding"/>
    <property type="evidence" value="ECO:0007669"/>
    <property type="project" value="UniProtKB-KW"/>
</dbReference>
<dbReference type="CDD" id="cd02440">
    <property type="entry name" value="AdoMet_MTases"/>
    <property type="match status" value="1"/>
</dbReference>
<dbReference type="FunFam" id="1.10.8.100:FF:000003">
    <property type="entry name" value="Ribosomal RNA small subunit methyltransferase A"/>
    <property type="match status" value="1"/>
</dbReference>
<dbReference type="FunFam" id="3.40.50.150:FF:000023">
    <property type="entry name" value="Ribosomal RNA small subunit methyltransferase A"/>
    <property type="match status" value="1"/>
</dbReference>
<dbReference type="Gene3D" id="1.10.8.100">
    <property type="entry name" value="Ribosomal RNA adenine dimethylase-like, domain 2"/>
    <property type="match status" value="1"/>
</dbReference>
<dbReference type="Gene3D" id="3.40.50.150">
    <property type="entry name" value="Vaccinia Virus protein VP39"/>
    <property type="match status" value="1"/>
</dbReference>
<dbReference type="HAMAP" id="MF_00607">
    <property type="entry name" value="16SrRNA_methyltr_A"/>
    <property type="match status" value="1"/>
</dbReference>
<dbReference type="InterPro" id="IPR001737">
    <property type="entry name" value="KsgA/Erm"/>
</dbReference>
<dbReference type="InterPro" id="IPR023165">
    <property type="entry name" value="rRNA_Ade_diMease-like_C"/>
</dbReference>
<dbReference type="InterPro" id="IPR020596">
    <property type="entry name" value="rRNA_Ade_Mease_Trfase_CS"/>
</dbReference>
<dbReference type="InterPro" id="IPR020598">
    <property type="entry name" value="rRNA_Ade_methylase_Trfase_N"/>
</dbReference>
<dbReference type="InterPro" id="IPR011530">
    <property type="entry name" value="rRNA_adenine_dimethylase"/>
</dbReference>
<dbReference type="InterPro" id="IPR029063">
    <property type="entry name" value="SAM-dependent_MTases_sf"/>
</dbReference>
<dbReference type="NCBIfam" id="TIGR00755">
    <property type="entry name" value="ksgA"/>
    <property type="match status" value="1"/>
</dbReference>
<dbReference type="PANTHER" id="PTHR11727">
    <property type="entry name" value="DIMETHYLADENOSINE TRANSFERASE"/>
    <property type="match status" value="1"/>
</dbReference>
<dbReference type="PANTHER" id="PTHR11727:SF7">
    <property type="entry name" value="DIMETHYLADENOSINE TRANSFERASE-RELATED"/>
    <property type="match status" value="1"/>
</dbReference>
<dbReference type="Pfam" id="PF00398">
    <property type="entry name" value="RrnaAD"/>
    <property type="match status" value="1"/>
</dbReference>
<dbReference type="SMART" id="SM00650">
    <property type="entry name" value="rADc"/>
    <property type="match status" value="1"/>
</dbReference>
<dbReference type="SUPFAM" id="SSF53335">
    <property type="entry name" value="S-adenosyl-L-methionine-dependent methyltransferases"/>
    <property type="match status" value="1"/>
</dbReference>
<dbReference type="PROSITE" id="PS01131">
    <property type="entry name" value="RRNA_A_DIMETH"/>
    <property type="match status" value="1"/>
</dbReference>
<dbReference type="PROSITE" id="PS51689">
    <property type="entry name" value="SAM_RNA_A_N6_MT"/>
    <property type="match status" value="1"/>
</dbReference>
<sequence length="300" mass="31383">MARVRQEALSSLLSARDVRDLADRLSIRPTKTLGQNFVVDANTVRRIVRVADLTPEDVVVEVGPGLGSLTLALLEAVDRVVAVEIDPVLAAELPATVAARGRPGTSFEVVLADAVQLAELPGPPPTALVANLPYNVAVPVLLTMLARFPSLRQGLVMVQSEVADRLVAPPGSRTYGVPSVKTAWYASAKRAGSVPPPVFWPVPRVDSGLVSFTRRPAPETTAGREEVFALVDAAFAQRRKTLRAALAGWAGSPAAAEEALRAAGVDPSVRGEQLGVADFARIAAHRPGGARAAGEPAGTP</sequence>
<gene>
    <name evidence="1" type="primary">rsmA</name>
    <name evidence="1" type="synonym">ksgA</name>
    <name type="ordered locus">Krad_1045</name>
</gene>
<organism>
    <name type="scientific">Kineococcus radiotolerans (strain ATCC BAA-149 / DSM 14245 / SRS30216)</name>
    <dbReference type="NCBI Taxonomy" id="266940"/>
    <lineage>
        <taxon>Bacteria</taxon>
        <taxon>Bacillati</taxon>
        <taxon>Actinomycetota</taxon>
        <taxon>Actinomycetes</taxon>
        <taxon>Kineosporiales</taxon>
        <taxon>Kineosporiaceae</taxon>
        <taxon>Kineococcus</taxon>
    </lineage>
</organism>
<evidence type="ECO:0000255" key="1">
    <source>
        <dbReference type="HAMAP-Rule" id="MF_00607"/>
    </source>
</evidence>
<accession>A6W6U4</accession>
<comment type="function">
    <text evidence="1">Specifically dimethylates two adjacent adenosines (A1518 and A1519) in the loop of a conserved hairpin near the 3'-end of 16S rRNA in the 30S particle. May play a critical role in biogenesis of 30S subunits.</text>
</comment>
<comment type="catalytic activity">
    <reaction evidence="1">
        <text>adenosine(1518)/adenosine(1519) in 16S rRNA + 4 S-adenosyl-L-methionine = N(6)-dimethyladenosine(1518)/N(6)-dimethyladenosine(1519) in 16S rRNA + 4 S-adenosyl-L-homocysteine + 4 H(+)</text>
        <dbReference type="Rhea" id="RHEA:19609"/>
        <dbReference type="Rhea" id="RHEA-COMP:10232"/>
        <dbReference type="Rhea" id="RHEA-COMP:10233"/>
        <dbReference type="ChEBI" id="CHEBI:15378"/>
        <dbReference type="ChEBI" id="CHEBI:57856"/>
        <dbReference type="ChEBI" id="CHEBI:59789"/>
        <dbReference type="ChEBI" id="CHEBI:74411"/>
        <dbReference type="ChEBI" id="CHEBI:74493"/>
        <dbReference type="EC" id="2.1.1.182"/>
    </reaction>
</comment>
<comment type="subcellular location">
    <subcellularLocation>
        <location evidence="1">Cytoplasm</location>
    </subcellularLocation>
</comment>
<comment type="similarity">
    <text evidence="1">Belongs to the class I-like SAM-binding methyltransferase superfamily. rRNA adenine N(6)-methyltransferase family. RsmA subfamily.</text>
</comment>
<name>RSMA_KINRD</name>
<feature type="chain" id="PRO_1000212248" description="Ribosomal RNA small subunit methyltransferase A">
    <location>
        <begin position="1"/>
        <end position="300"/>
    </location>
</feature>
<feature type="binding site" evidence="1">
    <location>
        <position position="36"/>
    </location>
    <ligand>
        <name>S-adenosyl-L-methionine</name>
        <dbReference type="ChEBI" id="CHEBI:59789"/>
    </ligand>
</feature>
<feature type="binding site" evidence="1">
    <location>
        <position position="38"/>
    </location>
    <ligand>
        <name>S-adenosyl-L-methionine</name>
        <dbReference type="ChEBI" id="CHEBI:59789"/>
    </ligand>
</feature>
<feature type="binding site" evidence="1">
    <location>
        <position position="63"/>
    </location>
    <ligand>
        <name>S-adenosyl-L-methionine</name>
        <dbReference type="ChEBI" id="CHEBI:59789"/>
    </ligand>
</feature>
<feature type="binding site" evidence="1">
    <location>
        <position position="84"/>
    </location>
    <ligand>
        <name>S-adenosyl-L-methionine</name>
        <dbReference type="ChEBI" id="CHEBI:59789"/>
    </ligand>
</feature>
<feature type="binding site" evidence="1">
    <location>
        <position position="113"/>
    </location>
    <ligand>
        <name>S-adenosyl-L-methionine</name>
        <dbReference type="ChEBI" id="CHEBI:59789"/>
    </ligand>
</feature>
<feature type="binding site" evidence="1">
    <location>
        <position position="131"/>
    </location>
    <ligand>
        <name>S-adenosyl-L-methionine</name>
        <dbReference type="ChEBI" id="CHEBI:59789"/>
    </ligand>
</feature>
<protein>
    <recommendedName>
        <fullName evidence="1">Ribosomal RNA small subunit methyltransferase A</fullName>
        <ecNumber evidence="1">2.1.1.182</ecNumber>
    </recommendedName>
    <alternativeName>
        <fullName evidence="1">16S rRNA (adenine(1518)-N(6)/adenine(1519)-N(6))-dimethyltransferase</fullName>
    </alternativeName>
    <alternativeName>
        <fullName evidence="1">16S rRNA dimethyladenosine transferase</fullName>
    </alternativeName>
    <alternativeName>
        <fullName evidence="1">16S rRNA dimethylase</fullName>
    </alternativeName>
    <alternativeName>
        <fullName evidence="1">S-adenosylmethionine-6-N', N'-adenosyl(rRNA) dimethyltransferase</fullName>
    </alternativeName>
</protein>